<sequence length="573" mass="63421">MAGSPGNELPLLQLQEVDSSKVGESGGSSGLLPTMYNGALPALSMESHAVCIPSPYTDSSHDYAALTFYSPPILSHGGPAVPESPAARQSLSPSLFWPAHGHHGHVSPLALHFQQPLVYREPAHSPWAEPKPLEHGQAQTSKLAGKRMAESEEGTSSVGGCFAGKGDMHFCAVCHDYASGYHYGVWSCEGCKAFFKRSIQGHNGYICPATNQCTIDKNRRKSCQACRLRKCYEVGMMKCGVRRERCTYRGARHRRMPHIRELAGTGGGARTQRRGEGVVPQTQEAQSSALTPEQLINRIIEAEPPEIYLMKELKKPFTEDSMMMSLTNLADKELVLMISWAKKIPGFVELDLSDQVHLLECCWLEVLMLGLMWRSVDHPGKLIFSPDLKLNRDEGSCVEGILEIFDMVLAATSRFRELKLQREEYVCLKAIILLNPNLCTTSSENREELESRNKLLHMLDSVTDALVWTIAKKGLTFQQQSARLAHLLMLLAHIRHLSNKGMEHLSNMKRKNVVPLYDLLLEMLDANTMHSSRMSASYSSQPSPWSQAAQSQPGPPPSCSGECPCPPKESSTI</sequence>
<organism>
    <name type="scientific">Anguilla japonica</name>
    <name type="common">Japanese eel</name>
    <dbReference type="NCBI Taxonomy" id="7937"/>
    <lineage>
        <taxon>Eukaryota</taxon>
        <taxon>Metazoa</taxon>
        <taxon>Chordata</taxon>
        <taxon>Craniata</taxon>
        <taxon>Vertebrata</taxon>
        <taxon>Euteleostomi</taxon>
        <taxon>Actinopterygii</taxon>
        <taxon>Neopterygii</taxon>
        <taxon>Teleostei</taxon>
        <taxon>Anguilliformes</taxon>
        <taxon>Anguillidae</taxon>
        <taxon>Anguilla</taxon>
    </lineage>
</organism>
<gene>
    <name type="primary">esr2</name>
    <name type="synonym">nr3a2</name>
</gene>
<keyword id="KW-0238">DNA-binding</keyword>
<keyword id="KW-0446">Lipid-binding</keyword>
<keyword id="KW-0479">Metal-binding</keyword>
<keyword id="KW-0539">Nucleus</keyword>
<keyword id="KW-0675">Receptor</keyword>
<keyword id="KW-0754">Steroid-binding</keyword>
<keyword id="KW-0804">Transcription</keyword>
<keyword id="KW-0805">Transcription regulation</keyword>
<keyword id="KW-0862">Zinc</keyword>
<keyword id="KW-0863">Zinc-finger</keyword>
<proteinExistence type="evidence at transcript level"/>
<feature type="chain" id="PRO_0000053651" description="Estrogen receptor beta">
    <location>
        <begin position="1"/>
        <end position="573"/>
    </location>
</feature>
<feature type="domain" description="NR LBD" evidence="2">
    <location>
        <begin position="291"/>
        <end position="527"/>
    </location>
</feature>
<feature type="DNA-binding region" description="Nuclear receptor" evidence="1">
    <location>
        <begin position="171"/>
        <end position="236"/>
    </location>
</feature>
<feature type="zinc finger region" description="NR C4-type" evidence="1">
    <location>
        <begin position="171"/>
        <end position="191"/>
    </location>
</feature>
<feature type="zinc finger region" description="NR C4-type" evidence="1">
    <location>
        <begin position="207"/>
        <end position="231"/>
    </location>
</feature>
<feature type="region of interest" description="Modulating">
    <location>
        <begin position="15"/>
        <end position="170"/>
    </location>
</feature>
<feature type="region of interest" description="Disordered" evidence="3">
    <location>
        <begin position="534"/>
        <end position="573"/>
    </location>
</feature>
<feature type="compositionally biased region" description="Low complexity" evidence="3">
    <location>
        <begin position="534"/>
        <end position="552"/>
    </location>
</feature>
<feature type="compositionally biased region" description="Low complexity" evidence="3">
    <location>
        <begin position="559"/>
        <end position="573"/>
    </location>
</feature>
<reference key="1">
    <citation type="journal article" date="1996" name="Mol. Cell. Endocrinol.">
        <title>Molecular cloning and characterization of Japanese eel estrogen receptor cDNA.</title>
        <authorList>
            <person name="Todo T."/>
            <person name="Adachi S."/>
            <person name="Yamauchi K."/>
        </authorList>
    </citation>
    <scope>NUCLEOTIDE SEQUENCE [MRNA]</scope>
    <source>
        <tissue>Liver</tissue>
    </source>
</reference>
<name>ESR2_ANGJA</name>
<dbReference type="EMBL" id="AB003356">
    <property type="protein sequence ID" value="BAA19851.1"/>
    <property type="molecule type" value="mRNA"/>
</dbReference>
<dbReference type="SMR" id="O13012"/>
<dbReference type="GO" id="GO:0005634">
    <property type="term" value="C:nucleus"/>
    <property type="evidence" value="ECO:0007669"/>
    <property type="project" value="UniProtKB-SubCell"/>
</dbReference>
<dbReference type="GO" id="GO:0042562">
    <property type="term" value="F:hormone binding"/>
    <property type="evidence" value="ECO:0007669"/>
    <property type="project" value="UniProtKB-ARBA"/>
</dbReference>
<dbReference type="GO" id="GO:0030284">
    <property type="term" value="F:nuclear estrogen receptor activity"/>
    <property type="evidence" value="ECO:0007669"/>
    <property type="project" value="InterPro"/>
</dbReference>
<dbReference type="GO" id="GO:0043565">
    <property type="term" value="F:sequence-specific DNA binding"/>
    <property type="evidence" value="ECO:0007669"/>
    <property type="project" value="InterPro"/>
</dbReference>
<dbReference type="GO" id="GO:0005496">
    <property type="term" value="F:steroid binding"/>
    <property type="evidence" value="ECO:0000250"/>
    <property type="project" value="UniProtKB"/>
</dbReference>
<dbReference type="GO" id="GO:0008270">
    <property type="term" value="F:zinc ion binding"/>
    <property type="evidence" value="ECO:0007669"/>
    <property type="project" value="UniProtKB-KW"/>
</dbReference>
<dbReference type="GO" id="GO:0071392">
    <property type="term" value="P:cellular response to estradiol stimulus"/>
    <property type="evidence" value="ECO:0007669"/>
    <property type="project" value="InterPro"/>
</dbReference>
<dbReference type="GO" id="GO:0030520">
    <property type="term" value="P:estrogen receptor signaling pathway"/>
    <property type="evidence" value="ECO:0007669"/>
    <property type="project" value="InterPro"/>
</dbReference>
<dbReference type="CDD" id="cd07171">
    <property type="entry name" value="NR_DBD_ER"/>
    <property type="match status" value="1"/>
</dbReference>
<dbReference type="CDD" id="cd06949">
    <property type="entry name" value="NR_LBD_ER"/>
    <property type="match status" value="1"/>
</dbReference>
<dbReference type="FunFam" id="1.10.565.10:FF:000010">
    <property type="entry name" value="Estrogen receptor"/>
    <property type="match status" value="1"/>
</dbReference>
<dbReference type="FunFam" id="3.30.50.10:FF:000014">
    <property type="entry name" value="Estrogen receptor beta"/>
    <property type="match status" value="1"/>
</dbReference>
<dbReference type="Gene3D" id="3.30.50.10">
    <property type="entry name" value="Erythroid Transcription Factor GATA-1, subunit A"/>
    <property type="match status" value="1"/>
</dbReference>
<dbReference type="Gene3D" id="1.10.565.10">
    <property type="entry name" value="Retinoid X Receptor"/>
    <property type="match status" value="1"/>
</dbReference>
<dbReference type="InterPro" id="IPR021064">
    <property type="entry name" value="ER-beta-like_N"/>
</dbReference>
<dbReference type="InterPro" id="IPR028355">
    <property type="entry name" value="ER-beta/gamma"/>
</dbReference>
<dbReference type="InterPro" id="IPR024178">
    <property type="entry name" value="Est_rcpt/est-rel_rcp"/>
</dbReference>
<dbReference type="InterPro" id="IPR035500">
    <property type="entry name" value="NHR-like_dom_sf"/>
</dbReference>
<dbReference type="InterPro" id="IPR000536">
    <property type="entry name" value="Nucl_hrmn_rcpt_lig-bd"/>
</dbReference>
<dbReference type="InterPro" id="IPR050200">
    <property type="entry name" value="Nuclear_hormone_rcpt_NR3"/>
</dbReference>
<dbReference type="InterPro" id="IPR001723">
    <property type="entry name" value="Nuclear_hrmn_rcpt"/>
</dbReference>
<dbReference type="InterPro" id="IPR001628">
    <property type="entry name" value="Znf_hrmn_rcpt"/>
</dbReference>
<dbReference type="InterPro" id="IPR013088">
    <property type="entry name" value="Znf_NHR/GATA"/>
</dbReference>
<dbReference type="PANTHER" id="PTHR48092">
    <property type="entry name" value="KNIRPS-RELATED PROTEIN-RELATED"/>
    <property type="match status" value="1"/>
</dbReference>
<dbReference type="Pfam" id="PF12497">
    <property type="entry name" value="ERbeta_N"/>
    <property type="match status" value="1"/>
</dbReference>
<dbReference type="Pfam" id="PF00104">
    <property type="entry name" value="Hormone_recep"/>
    <property type="match status" value="1"/>
</dbReference>
<dbReference type="Pfam" id="PF00105">
    <property type="entry name" value="zf-C4"/>
    <property type="match status" value="1"/>
</dbReference>
<dbReference type="PIRSF" id="PIRSF500102">
    <property type="entry name" value="ER-b"/>
    <property type="match status" value="1"/>
</dbReference>
<dbReference type="PIRSF" id="PIRSF002527">
    <property type="entry name" value="ER-like_NR"/>
    <property type="match status" value="1"/>
</dbReference>
<dbReference type="PRINTS" id="PR00398">
    <property type="entry name" value="STRDHORMONER"/>
</dbReference>
<dbReference type="PRINTS" id="PR00047">
    <property type="entry name" value="STROIDFINGER"/>
</dbReference>
<dbReference type="SMART" id="SM00430">
    <property type="entry name" value="HOLI"/>
    <property type="match status" value="1"/>
</dbReference>
<dbReference type="SMART" id="SM00399">
    <property type="entry name" value="ZnF_C4"/>
    <property type="match status" value="1"/>
</dbReference>
<dbReference type="SUPFAM" id="SSF57716">
    <property type="entry name" value="Glucocorticoid receptor-like (DNA-binding domain)"/>
    <property type="match status" value="1"/>
</dbReference>
<dbReference type="SUPFAM" id="SSF48508">
    <property type="entry name" value="Nuclear receptor ligand-binding domain"/>
    <property type="match status" value="1"/>
</dbReference>
<dbReference type="PROSITE" id="PS51843">
    <property type="entry name" value="NR_LBD"/>
    <property type="match status" value="1"/>
</dbReference>
<dbReference type="PROSITE" id="PS00031">
    <property type="entry name" value="NUCLEAR_REC_DBD_1"/>
    <property type="match status" value="1"/>
</dbReference>
<dbReference type="PROSITE" id="PS51030">
    <property type="entry name" value="NUCLEAR_REC_DBD_2"/>
    <property type="match status" value="1"/>
</dbReference>
<comment type="function">
    <text>Binds estrogens with an affinity similar to that of ER-alpha, and activates expression of reporter genes containing estrogen response elements (ERE) in an estrogen-dependent manner.</text>
</comment>
<comment type="subunit">
    <text>Binds DNA as a homodimer. Can form a heterodimer with ER-alpha.</text>
</comment>
<comment type="subcellular location">
    <subcellularLocation>
        <location>Nucleus</location>
    </subcellularLocation>
</comment>
<comment type="tissue specificity">
    <text>Liver.</text>
</comment>
<comment type="induction">
    <text>By 17-beta-estradiol.</text>
</comment>
<comment type="domain">
    <text>Composed of three domains: a modulating N-terminal domain, a DNA-binding domain and a C-terminal ligand-binding domain.</text>
</comment>
<comment type="similarity">
    <text evidence="4">Belongs to the nuclear hormone receptor family. NR3 subfamily.</text>
</comment>
<protein>
    <recommendedName>
        <fullName>Estrogen receptor beta</fullName>
        <shortName>ER-beta</shortName>
    </recommendedName>
    <alternativeName>
        <fullName>Nuclear receptor subfamily 3 group A member 2</fullName>
    </alternativeName>
</protein>
<accession>O13012</accession>
<evidence type="ECO:0000255" key="1">
    <source>
        <dbReference type="PROSITE-ProRule" id="PRU00407"/>
    </source>
</evidence>
<evidence type="ECO:0000255" key="2">
    <source>
        <dbReference type="PROSITE-ProRule" id="PRU01189"/>
    </source>
</evidence>
<evidence type="ECO:0000256" key="3">
    <source>
        <dbReference type="SAM" id="MobiDB-lite"/>
    </source>
</evidence>
<evidence type="ECO:0000305" key="4"/>